<name>AL1A1_RABIT</name>
<accession>Q8MI17</accession>
<evidence type="ECO:0000250" key="1">
    <source>
        <dbReference type="UniProtKB" id="P00352"/>
    </source>
</evidence>
<evidence type="ECO:0000250" key="2">
    <source>
        <dbReference type="UniProtKB" id="P15437"/>
    </source>
</evidence>
<evidence type="ECO:0000250" key="3">
    <source>
        <dbReference type="UniProtKB" id="P20000"/>
    </source>
</evidence>
<evidence type="ECO:0000250" key="4">
    <source>
        <dbReference type="UniProtKB" id="P24549"/>
    </source>
</evidence>
<evidence type="ECO:0000250" key="5">
    <source>
        <dbReference type="UniProtKB" id="P51647"/>
    </source>
</evidence>
<evidence type="ECO:0000250" key="6">
    <source>
        <dbReference type="UniProtKB" id="P51977"/>
    </source>
</evidence>
<evidence type="ECO:0000250" key="7">
    <source>
        <dbReference type="UniProtKB" id="Q8HYE4"/>
    </source>
</evidence>
<evidence type="ECO:0000255" key="8">
    <source>
        <dbReference type="PROSITE-ProRule" id="PRU10007"/>
    </source>
</evidence>
<evidence type="ECO:0000255" key="9">
    <source>
        <dbReference type="PROSITE-ProRule" id="PRU10008"/>
    </source>
</evidence>
<evidence type="ECO:0000269" key="10">
    <source>
    </source>
</evidence>
<evidence type="ECO:0000303" key="11">
    <source>
    </source>
</evidence>
<evidence type="ECO:0000305" key="12"/>
<evidence type="ECO:0000305" key="13">
    <source>
    </source>
</evidence>
<reference key="1">
    <citation type="journal article" date="2003" name="DNA Cell Biol.">
        <title>Molecular cloning and baculovirus expression of the rabbit corneal aldehyde dehydrogenase (ALDH1A1) cDNA.</title>
        <authorList>
            <person name="Manzer R."/>
            <person name="Qamar L."/>
            <person name="Estey T."/>
            <person name="Pappa A."/>
            <person name="Petersen D.R."/>
            <person name="Vasiliou V."/>
        </authorList>
    </citation>
    <scope>NUCLEOTIDE SEQUENCE [MRNA]</scope>
    <scope>FUNCTION</scope>
    <scope>CATALYTIC ACTIVITY</scope>
    <scope>BIOPHYSICOCHEMICAL PROPERTIES</scope>
    <scope>SUBCELLULAR LOCATION</scope>
    <source>
        <tissue>Cornea</tissue>
    </source>
</reference>
<proteinExistence type="evidence at protein level"/>
<comment type="function">
    <text evidence="1 4 10">Cytosolic dehydrogenase that catalyzes the irreversible oxidation of a wide range of aldehydes to their corresponding carboxylic acid (PubMed:12941160). Functions downstream of retinol dehydrogenases and catalyzes the oxidation of retinaldehyde into retinoic acid, the second step in the oxidation of retinol/vitamin A into retinoic acid. This pathway is crucial to control the levels of retinol and retinoic acid, two important molecules which excess can be teratogenic and cytotoxic (By similarity). Also oxidizes aldehydes resulting from lipid peroxidation like (E)-4-hydroxynon-2-enal/HNE, malonaldehyde and hexanal that form protein adducts and are highly cytotoxic. By participating for instance to the clearance of (E)-4-hydroxynon-2-enal/HNE in the lens epithelium prevents the formation of HNE-protein adducts and lens opacification (PubMed:12941160). Functions also downstream of fructosamine-3-kinase in the fructosamine degradation pathway by catalyzing the oxidation of 3-deoxyglucosone, the carbohydrate product of fructosamine 3-phosphate decomposition, which is itself a potent glycating agent that may react with lysine and arginine side-chains of proteins (By similarity). Also has an aminobutyraldehyde dehydrogenase activity and is probably part of an alternative pathway for the biosynthesis of GABA/4-aminobutanoate in midbrain, thereby playing a role in GABAergic synaptic transmission (By similarity).</text>
</comment>
<comment type="catalytic activity">
    <reaction evidence="10">
        <text>an aldehyde + NAD(+) + H2O = a carboxylate + NADH + 2 H(+)</text>
        <dbReference type="Rhea" id="RHEA:16185"/>
        <dbReference type="ChEBI" id="CHEBI:15377"/>
        <dbReference type="ChEBI" id="CHEBI:15378"/>
        <dbReference type="ChEBI" id="CHEBI:17478"/>
        <dbReference type="ChEBI" id="CHEBI:29067"/>
        <dbReference type="ChEBI" id="CHEBI:57540"/>
        <dbReference type="ChEBI" id="CHEBI:57945"/>
        <dbReference type="EC" id="1.2.1.3"/>
    </reaction>
    <physiologicalReaction direction="left-to-right" evidence="13">
        <dbReference type="Rhea" id="RHEA:16186"/>
    </physiologicalReaction>
</comment>
<comment type="catalytic activity">
    <reaction evidence="5">
        <text>all-trans-retinal + NAD(+) + H2O = all-trans-retinoate + NADH + 2 H(+)</text>
        <dbReference type="Rhea" id="RHEA:42080"/>
        <dbReference type="ChEBI" id="CHEBI:15377"/>
        <dbReference type="ChEBI" id="CHEBI:15378"/>
        <dbReference type="ChEBI" id="CHEBI:17898"/>
        <dbReference type="ChEBI" id="CHEBI:35291"/>
        <dbReference type="ChEBI" id="CHEBI:57540"/>
        <dbReference type="ChEBI" id="CHEBI:57945"/>
        <dbReference type="EC" id="1.2.1.36"/>
    </reaction>
    <physiologicalReaction direction="left-to-right" evidence="5">
        <dbReference type="Rhea" id="RHEA:42081"/>
    </physiologicalReaction>
</comment>
<comment type="catalytic activity">
    <reaction evidence="5">
        <text>9-cis-retinal + NAD(+) + H2O = 9-cis-retinoate + NADH + 2 H(+)</text>
        <dbReference type="Rhea" id="RHEA:42084"/>
        <dbReference type="ChEBI" id="CHEBI:15377"/>
        <dbReference type="ChEBI" id="CHEBI:15378"/>
        <dbReference type="ChEBI" id="CHEBI:57540"/>
        <dbReference type="ChEBI" id="CHEBI:57945"/>
        <dbReference type="ChEBI" id="CHEBI:78273"/>
        <dbReference type="ChEBI" id="CHEBI:78630"/>
    </reaction>
    <physiologicalReaction direction="left-to-right" evidence="5">
        <dbReference type="Rhea" id="RHEA:42085"/>
    </physiologicalReaction>
</comment>
<comment type="catalytic activity">
    <reaction evidence="5">
        <text>11-cis-retinal + NAD(+) + H2O = 11-cis-retinoate + NADH + 2 H(+)</text>
        <dbReference type="Rhea" id="RHEA:47132"/>
        <dbReference type="ChEBI" id="CHEBI:15377"/>
        <dbReference type="ChEBI" id="CHEBI:15378"/>
        <dbReference type="ChEBI" id="CHEBI:16066"/>
        <dbReference type="ChEBI" id="CHEBI:57540"/>
        <dbReference type="ChEBI" id="CHEBI:57945"/>
        <dbReference type="ChEBI" id="CHEBI:87435"/>
    </reaction>
    <physiologicalReaction direction="left-to-right" evidence="5">
        <dbReference type="Rhea" id="RHEA:47133"/>
    </physiologicalReaction>
</comment>
<comment type="catalytic activity">
    <reaction evidence="7">
        <text>13-cis-retinal + NAD(+) + H2O = 13-cis-retinoate + NADH + 2 H(+)</text>
        <dbReference type="Rhea" id="RHEA:67332"/>
        <dbReference type="ChEBI" id="CHEBI:15377"/>
        <dbReference type="ChEBI" id="CHEBI:15378"/>
        <dbReference type="ChEBI" id="CHEBI:45487"/>
        <dbReference type="ChEBI" id="CHEBI:57540"/>
        <dbReference type="ChEBI" id="CHEBI:57945"/>
        <dbReference type="ChEBI" id="CHEBI:169952"/>
    </reaction>
    <physiologicalReaction direction="left-to-right" evidence="7">
        <dbReference type="Rhea" id="RHEA:67333"/>
    </physiologicalReaction>
</comment>
<comment type="catalytic activity">
    <reaction evidence="10">
        <text>(E)-4-hydroxynon-2-enal + NAD(+) + H2O = (E)-4-hydroxynon-2-enoate + NADH + 2 H(+)</text>
        <dbReference type="Rhea" id="RHEA:67248"/>
        <dbReference type="ChEBI" id="CHEBI:15377"/>
        <dbReference type="ChEBI" id="CHEBI:15378"/>
        <dbReference type="ChEBI" id="CHEBI:57540"/>
        <dbReference type="ChEBI" id="CHEBI:57945"/>
        <dbReference type="ChEBI" id="CHEBI:58968"/>
        <dbReference type="ChEBI" id="CHEBI:142920"/>
    </reaction>
    <physiologicalReaction direction="left-to-right" evidence="13">
        <dbReference type="Rhea" id="RHEA:67249"/>
    </physiologicalReaction>
</comment>
<comment type="catalytic activity">
    <reaction evidence="10">
        <text>malonaldehyde + NAD(+) + H2O = 3-oxopropanoate + NADH + 2 H(+)</text>
        <dbReference type="Rhea" id="RHEA:67252"/>
        <dbReference type="ChEBI" id="CHEBI:15377"/>
        <dbReference type="ChEBI" id="CHEBI:15378"/>
        <dbReference type="ChEBI" id="CHEBI:33190"/>
        <dbReference type="ChEBI" id="CHEBI:57540"/>
        <dbReference type="ChEBI" id="CHEBI:57945"/>
        <dbReference type="ChEBI" id="CHEBI:566274"/>
    </reaction>
    <physiologicalReaction direction="left-to-right" evidence="13">
        <dbReference type="Rhea" id="RHEA:67253"/>
    </physiologicalReaction>
</comment>
<comment type="catalytic activity">
    <reaction evidence="10">
        <text>hexanal + NAD(+) + H2O = hexanoate + NADH + 2 H(+)</text>
        <dbReference type="Rhea" id="RHEA:67276"/>
        <dbReference type="ChEBI" id="CHEBI:15377"/>
        <dbReference type="ChEBI" id="CHEBI:15378"/>
        <dbReference type="ChEBI" id="CHEBI:17120"/>
        <dbReference type="ChEBI" id="CHEBI:57540"/>
        <dbReference type="ChEBI" id="CHEBI:57945"/>
        <dbReference type="ChEBI" id="CHEBI:88528"/>
    </reaction>
    <physiologicalReaction direction="left-to-right" evidence="13">
        <dbReference type="Rhea" id="RHEA:67277"/>
    </physiologicalReaction>
</comment>
<comment type="catalytic activity">
    <reaction evidence="10">
        <text>propanal + NAD(+) + H2O = propanoate + NADH + 2 H(+)</text>
        <dbReference type="Rhea" id="RHEA:67256"/>
        <dbReference type="ChEBI" id="CHEBI:15377"/>
        <dbReference type="ChEBI" id="CHEBI:15378"/>
        <dbReference type="ChEBI" id="CHEBI:17153"/>
        <dbReference type="ChEBI" id="CHEBI:17272"/>
        <dbReference type="ChEBI" id="CHEBI:57540"/>
        <dbReference type="ChEBI" id="CHEBI:57945"/>
    </reaction>
    <physiologicalReaction direction="left-to-right" evidence="13">
        <dbReference type="Rhea" id="RHEA:67257"/>
    </physiologicalReaction>
</comment>
<comment type="catalytic activity">
    <reaction evidence="1">
        <text>3-deoxyglucosone + NAD(+) + H2O = 2-dehydro-3-deoxy-D-gluconate + NADH + 2 H(+)</text>
        <dbReference type="Rhea" id="RHEA:67244"/>
        <dbReference type="ChEBI" id="CHEBI:15377"/>
        <dbReference type="ChEBI" id="CHEBI:15378"/>
        <dbReference type="ChEBI" id="CHEBI:57540"/>
        <dbReference type="ChEBI" id="CHEBI:57945"/>
        <dbReference type="ChEBI" id="CHEBI:57990"/>
        <dbReference type="ChEBI" id="CHEBI:60777"/>
    </reaction>
    <physiologicalReaction direction="left-to-right" evidence="1">
        <dbReference type="Rhea" id="RHEA:67245"/>
    </physiologicalReaction>
</comment>
<comment type="catalytic activity">
    <reaction evidence="1">
        <text>acetaldehyde + NAD(+) + H2O = acetate + NADH + 2 H(+)</text>
        <dbReference type="Rhea" id="RHEA:25294"/>
        <dbReference type="ChEBI" id="CHEBI:15343"/>
        <dbReference type="ChEBI" id="CHEBI:15377"/>
        <dbReference type="ChEBI" id="CHEBI:15378"/>
        <dbReference type="ChEBI" id="CHEBI:30089"/>
        <dbReference type="ChEBI" id="CHEBI:57540"/>
        <dbReference type="ChEBI" id="CHEBI:57945"/>
        <dbReference type="EC" id="1.2.1.3"/>
    </reaction>
    <physiologicalReaction direction="left-to-right" evidence="1">
        <dbReference type="Rhea" id="RHEA:25295"/>
    </physiologicalReaction>
</comment>
<comment type="catalytic activity">
    <reaction evidence="1">
        <text>benzaldehyde + NAD(+) + H2O = benzoate + NADH + 2 H(+)</text>
        <dbReference type="Rhea" id="RHEA:11840"/>
        <dbReference type="ChEBI" id="CHEBI:15377"/>
        <dbReference type="ChEBI" id="CHEBI:15378"/>
        <dbReference type="ChEBI" id="CHEBI:16150"/>
        <dbReference type="ChEBI" id="CHEBI:17169"/>
        <dbReference type="ChEBI" id="CHEBI:57540"/>
        <dbReference type="ChEBI" id="CHEBI:57945"/>
        <dbReference type="EC" id="1.2.1.28"/>
    </reaction>
    <physiologicalReaction direction="left-to-right" evidence="1">
        <dbReference type="Rhea" id="RHEA:11841"/>
    </physiologicalReaction>
</comment>
<comment type="catalytic activity">
    <reaction evidence="4">
        <text>4-aminobutanal + NAD(+) + H2O = 4-aminobutanoate + NADH + 2 H(+)</text>
        <dbReference type="Rhea" id="RHEA:19105"/>
        <dbReference type="ChEBI" id="CHEBI:15377"/>
        <dbReference type="ChEBI" id="CHEBI:15378"/>
        <dbReference type="ChEBI" id="CHEBI:57540"/>
        <dbReference type="ChEBI" id="CHEBI:57945"/>
        <dbReference type="ChEBI" id="CHEBI:58264"/>
        <dbReference type="ChEBI" id="CHEBI:59888"/>
        <dbReference type="EC" id="1.2.1.19"/>
    </reaction>
    <physiologicalReaction direction="left-to-right" evidence="4">
        <dbReference type="Rhea" id="RHEA:19106"/>
    </physiologicalReaction>
</comment>
<comment type="biophysicochemical properties">
    <kinetics>
        <KM evidence="10">2.1 uM for (E)-4-hydroxynon-2-enal</KM>
        <KM evidence="10">14 uM for malonaldehyde</KM>
        <KM evidence="10">3.5 uM for hexanal</KM>
        <KM evidence="10">66.2 uM for propanal</KM>
        <Vmax evidence="10">112.9 nmol/min/mg enzyme with (E)-4-hydroxynon-2-enal</Vmax>
        <Vmax evidence="10">303.9 nmol/min/mg enzyme with malonaldehyde</Vmax>
        <Vmax evidence="10">146.9 nmol/min/mg enzyme with hexanal</Vmax>
        <Vmax evidence="10">523.0 nmol/min/mg enzyme with propanal</Vmax>
        <text evidence="10">Has a lower activity toward propanal.</text>
    </kinetics>
</comment>
<comment type="pathway">
    <text evidence="5">Cofactor metabolism; retinol metabolism.</text>
</comment>
<comment type="subunit">
    <text evidence="1 6">Homotetramer (By similarity). Interacts with PRMT3; the interaction is direct, inhibits ALDH1A1 aldehyde dehydrogenase activity and is independent of the methyltransferase activity of PRMT3 (By similarity).</text>
</comment>
<comment type="subcellular location">
    <subcellularLocation>
        <location evidence="10">Cytoplasm</location>
        <location evidence="10">Cytosol</location>
    </subcellularLocation>
    <subcellularLocation>
        <location evidence="4">Cell projection</location>
        <location evidence="4">Axon</location>
    </subcellularLocation>
</comment>
<comment type="PTM">
    <text evidence="2">The N-terminus is blocked most probably by acetylation.</text>
</comment>
<comment type="similarity">
    <text evidence="12">Belongs to the aldehyde dehydrogenase family.</text>
</comment>
<sequence>MADLPTPLTNLKIQYTKIFINNEWHDSVSGKKFPVLNPATEEQICLIEEGDKADVDKAVKAARQAFQIGSPWRTMDASERGRLLYKLADLIERDRLLLATMESLNAGKLFPNAYLMDLGGCIKTLRYCAGWADKIQGRTMPMDGDFFCYTRHEPVGVCGQIIPWNFPLVMLIWKIGPALSCGNTVIVKPAEQTPLTALHVASLIKEAGFPPGVVNIVPGYGPTAGAAISSHMDIDKVAFTGSTEVGKLIKEAAGKSNLKRVTLELGGKSPCIVFADADLDNAVEFAHQGVFYHQGQCCIAASRLFVEESIYDEFVRRSVERAKKYVLGNPLAPEVNQGPQIDKEQYNKILDLIESGKKEGAKLECGGGPWGNKGYFIQPTVFSNVTDEMRIAKEEIFGPVQQIMKFKSLDDVIKRANNTTYGLSAGIFTKDLDKAVTVSSALQAGTVWVNCYSVVSAQVPFGGFKMSGNGRELGEYGLQQYTEVKTVTVKISQKNS</sequence>
<gene>
    <name evidence="11" type="primary">ALDH1A1</name>
</gene>
<dbReference type="EC" id="1.2.1.19" evidence="4"/>
<dbReference type="EC" id="1.2.1.28" evidence="1"/>
<dbReference type="EC" id="1.2.1.3" evidence="10"/>
<dbReference type="EC" id="1.2.1.36" evidence="5"/>
<dbReference type="EMBL" id="AY038801">
    <property type="protein sequence ID" value="AAK72097.1"/>
    <property type="molecule type" value="mRNA"/>
</dbReference>
<dbReference type="RefSeq" id="XP_051713332.1">
    <property type="nucleotide sequence ID" value="XM_051857372.2"/>
</dbReference>
<dbReference type="SMR" id="Q8MI17"/>
<dbReference type="FunCoup" id="Q8MI17">
    <property type="interactions" value="384"/>
</dbReference>
<dbReference type="STRING" id="9986.ENSOCUP00000018475"/>
<dbReference type="PaxDb" id="9986-ENSOCUP00000018475"/>
<dbReference type="GeneID" id="100008636"/>
<dbReference type="eggNOG" id="KOG2450">
    <property type="taxonomic scope" value="Eukaryota"/>
</dbReference>
<dbReference type="InParanoid" id="Q8MI17"/>
<dbReference type="SABIO-RK" id="Q8MI17"/>
<dbReference type="UniPathway" id="UPA00912"/>
<dbReference type="Proteomes" id="UP000001811">
    <property type="component" value="Unplaced"/>
</dbReference>
<dbReference type="GO" id="GO:0030424">
    <property type="term" value="C:axon"/>
    <property type="evidence" value="ECO:0000250"/>
    <property type="project" value="UniProtKB"/>
</dbReference>
<dbReference type="GO" id="GO:0005829">
    <property type="term" value="C:cytosol"/>
    <property type="evidence" value="ECO:0000314"/>
    <property type="project" value="UniProtKB"/>
</dbReference>
<dbReference type="GO" id="GO:0045202">
    <property type="term" value="C:synapse"/>
    <property type="evidence" value="ECO:0000250"/>
    <property type="project" value="UniProtKB"/>
</dbReference>
<dbReference type="GO" id="GO:0106373">
    <property type="term" value="F:3-deoxyglucosone dehydrogenase activity"/>
    <property type="evidence" value="ECO:0000250"/>
    <property type="project" value="UniProtKB"/>
</dbReference>
<dbReference type="GO" id="GO:0140087">
    <property type="term" value="F:acetaldehyde dehydrogenase (NAD+) activity"/>
    <property type="evidence" value="ECO:0007669"/>
    <property type="project" value="RHEA"/>
</dbReference>
<dbReference type="GO" id="GO:0004029">
    <property type="term" value="F:aldehyde dehydrogenase (NAD+) activity"/>
    <property type="evidence" value="ECO:0000314"/>
    <property type="project" value="UniProtKB"/>
</dbReference>
<dbReference type="GO" id="GO:0019145">
    <property type="term" value="F:aminobutyraldehyde dehydrogenase (NAD+) activity"/>
    <property type="evidence" value="ECO:0000250"/>
    <property type="project" value="UniProtKB"/>
</dbReference>
<dbReference type="GO" id="GO:0018479">
    <property type="term" value="F:benzaldehyde dehydrogenase (NAD+) activity"/>
    <property type="evidence" value="ECO:0007669"/>
    <property type="project" value="RHEA"/>
</dbReference>
<dbReference type="GO" id="GO:0001758">
    <property type="term" value="F:retinal dehydrogenase activity"/>
    <property type="evidence" value="ECO:0000250"/>
    <property type="project" value="UniProtKB"/>
</dbReference>
<dbReference type="GO" id="GO:0110095">
    <property type="term" value="P:cellular detoxification of aldehyde"/>
    <property type="evidence" value="ECO:0000305"/>
    <property type="project" value="UniProtKB"/>
</dbReference>
<dbReference type="GO" id="GO:0030392">
    <property type="term" value="P:fructosamine catabolic process"/>
    <property type="evidence" value="ECO:0000250"/>
    <property type="project" value="UniProtKB"/>
</dbReference>
<dbReference type="GO" id="GO:0009449">
    <property type="term" value="P:gamma-aminobutyric acid biosynthetic process"/>
    <property type="evidence" value="ECO:0000250"/>
    <property type="project" value="UniProtKB"/>
</dbReference>
<dbReference type="GO" id="GO:0036438">
    <property type="term" value="P:maintenance of lens transparency"/>
    <property type="evidence" value="ECO:0000250"/>
    <property type="project" value="UniProtKB"/>
</dbReference>
<dbReference type="GO" id="GO:0001523">
    <property type="term" value="P:retinoid metabolic process"/>
    <property type="evidence" value="ECO:0000250"/>
    <property type="project" value="UniProtKB"/>
</dbReference>
<dbReference type="GO" id="GO:0042572">
    <property type="term" value="P:retinol metabolic process"/>
    <property type="evidence" value="ECO:0007669"/>
    <property type="project" value="UniProtKB-UniPathway"/>
</dbReference>
<dbReference type="CDD" id="cd07141">
    <property type="entry name" value="ALDH_F1AB_F2_RALDH1"/>
    <property type="match status" value="1"/>
</dbReference>
<dbReference type="FunFam" id="3.40.605.10:FF:000029">
    <property type="entry name" value="Aldehyde dehydrogenase, mitochondrial"/>
    <property type="match status" value="1"/>
</dbReference>
<dbReference type="FunFam" id="3.40.605.10:FF:000026">
    <property type="entry name" value="Aldehyde dehydrogenase, putative"/>
    <property type="match status" value="1"/>
</dbReference>
<dbReference type="FunFam" id="3.40.309.10:FF:000001">
    <property type="entry name" value="Mitochondrial aldehyde dehydrogenase 2"/>
    <property type="match status" value="1"/>
</dbReference>
<dbReference type="Gene3D" id="3.40.605.10">
    <property type="entry name" value="Aldehyde Dehydrogenase, Chain A, domain 1"/>
    <property type="match status" value="1"/>
</dbReference>
<dbReference type="Gene3D" id="3.40.309.10">
    <property type="entry name" value="Aldehyde Dehydrogenase, Chain A, domain 2"/>
    <property type="match status" value="1"/>
</dbReference>
<dbReference type="InterPro" id="IPR016161">
    <property type="entry name" value="Ald_DH/histidinol_DH"/>
</dbReference>
<dbReference type="InterPro" id="IPR016163">
    <property type="entry name" value="Ald_DH_C"/>
</dbReference>
<dbReference type="InterPro" id="IPR016160">
    <property type="entry name" value="Ald_DH_CS_CYS"/>
</dbReference>
<dbReference type="InterPro" id="IPR029510">
    <property type="entry name" value="Ald_DH_CS_GLU"/>
</dbReference>
<dbReference type="InterPro" id="IPR016162">
    <property type="entry name" value="Ald_DH_N"/>
</dbReference>
<dbReference type="InterPro" id="IPR015590">
    <property type="entry name" value="Aldehyde_DH_dom"/>
</dbReference>
<dbReference type="PANTHER" id="PTHR11699">
    <property type="entry name" value="ALDEHYDE DEHYDROGENASE-RELATED"/>
    <property type="match status" value="1"/>
</dbReference>
<dbReference type="Pfam" id="PF00171">
    <property type="entry name" value="Aldedh"/>
    <property type="match status" value="1"/>
</dbReference>
<dbReference type="SUPFAM" id="SSF53720">
    <property type="entry name" value="ALDH-like"/>
    <property type="match status" value="1"/>
</dbReference>
<dbReference type="PROSITE" id="PS00070">
    <property type="entry name" value="ALDEHYDE_DEHYDR_CYS"/>
    <property type="match status" value="1"/>
</dbReference>
<dbReference type="PROSITE" id="PS00687">
    <property type="entry name" value="ALDEHYDE_DEHYDR_GLU"/>
    <property type="match status" value="1"/>
</dbReference>
<protein>
    <recommendedName>
        <fullName evidence="13">Aldehyde dehydrogenase 1A1</fullName>
        <ecNumber evidence="4">1.2.1.19</ecNumber>
        <ecNumber evidence="1">1.2.1.28</ecNumber>
        <ecNumber evidence="10">1.2.1.3</ecNumber>
        <ecNumber evidence="5">1.2.1.36</ecNumber>
    </recommendedName>
    <alternativeName>
        <fullName evidence="1">3-deoxyglucosone dehydrogenase</fullName>
    </alternativeName>
    <alternativeName>
        <fullName>ALDH-E1</fullName>
    </alternativeName>
    <alternativeName>
        <fullName>ALHDII</fullName>
    </alternativeName>
    <alternativeName>
        <fullName evidence="11">Aldehyde dehydrogenase family 1 member A1</fullName>
    </alternativeName>
    <alternativeName>
        <fullName evidence="12">Aldehyde dehydrogenase, cytosolic</fullName>
    </alternativeName>
    <alternativeName>
        <fullName evidence="12">Retinal dehydrogenase 1</fullName>
        <shortName evidence="12">RALDH 1</shortName>
        <shortName evidence="12">RalDH1</shortName>
    </alternativeName>
</protein>
<organism>
    <name type="scientific">Oryctolagus cuniculus</name>
    <name type="common">Rabbit</name>
    <dbReference type="NCBI Taxonomy" id="9986"/>
    <lineage>
        <taxon>Eukaryota</taxon>
        <taxon>Metazoa</taxon>
        <taxon>Chordata</taxon>
        <taxon>Craniata</taxon>
        <taxon>Vertebrata</taxon>
        <taxon>Euteleostomi</taxon>
        <taxon>Mammalia</taxon>
        <taxon>Eutheria</taxon>
        <taxon>Euarchontoglires</taxon>
        <taxon>Glires</taxon>
        <taxon>Lagomorpha</taxon>
        <taxon>Leporidae</taxon>
        <taxon>Oryctolagus</taxon>
    </lineage>
</organism>
<keyword id="KW-0007">Acetylation</keyword>
<keyword id="KW-0966">Cell projection</keyword>
<keyword id="KW-0963">Cytoplasm</keyword>
<keyword id="KW-0443">Lipid metabolism</keyword>
<keyword id="KW-0520">NAD</keyword>
<keyword id="KW-0560">Oxidoreductase</keyword>
<keyword id="KW-0597">Phosphoprotein</keyword>
<keyword id="KW-1185">Reference proteome</keyword>
<feature type="chain" id="PRO_0000056418" description="Aldehyde dehydrogenase 1A1">
    <location>
        <begin position="1"/>
        <end position="496"/>
    </location>
</feature>
<feature type="region of interest" description="Mediates interaction with PRMT3" evidence="1">
    <location>
        <begin position="331"/>
        <end position="496"/>
    </location>
</feature>
<feature type="active site" description="Proton acceptor" evidence="8 9">
    <location>
        <position position="264"/>
    </location>
</feature>
<feature type="active site" description="Nucleophile" evidence="8 9">
    <location>
        <position position="298"/>
    </location>
</feature>
<feature type="binding site" evidence="1">
    <location>
        <begin position="162"/>
        <end position="165"/>
    </location>
    <ligand>
        <name>NAD(+)</name>
        <dbReference type="ChEBI" id="CHEBI:57540"/>
    </ligand>
</feature>
<feature type="binding site" evidence="1">
    <location>
        <begin position="188"/>
        <end position="191"/>
    </location>
    <ligand>
        <name>NAD(+)</name>
        <dbReference type="ChEBI" id="CHEBI:57540"/>
    </ligand>
</feature>
<feature type="binding site" evidence="1">
    <location>
        <begin position="221"/>
        <end position="222"/>
    </location>
    <ligand>
        <name>NAD(+)</name>
        <dbReference type="ChEBI" id="CHEBI:57540"/>
    </ligand>
</feature>
<feature type="binding site" evidence="1">
    <location>
        <begin position="241"/>
        <end position="242"/>
    </location>
    <ligand>
        <name>NAD(+)</name>
        <dbReference type="ChEBI" id="CHEBI:57540"/>
    </ligand>
</feature>
<feature type="binding site" evidence="1">
    <location>
        <begin position="264"/>
        <end position="266"/>
    </location>
    <ligand>
        <name>NAD(+)</name>
        <dbReference type="ChEBI" id="CHEBI:57540"/>
    </ligand>
</feature>
<feature type="binding site" evidence="1">
    <location>
        <begin position="344"/>
        <end position="348"/>
    </location>
    <ligand>
        <name>NAD(+)</name>
        <dbReference type="ChEBI" id="CHEBI:57540"/>
    </ligand>
</feature>
<feature type="binding site" evidence="1">
    <location>
        <begin position="395"/>
        <end position="397"/>
    </location>
    <ligand>
        <name>NAD(+)</name>
        <dbReference type="ChEBI" id="CHEBI:57540"/>
    </ligand>
</feature>
<feature type="site" description="Transition state stabilizer" evidence="3">
    <location>
        <position position="165"/>
    </location>
</feature>
<feature type="modified residue" description="N6-acetyllysine" evidence="1">
    <location>
        <position position="86"/>
    </location>
</feature>
<feature type="modified residue" description="N6-acetyllysine" evidence="1">
    <location>
        <position position="123"/>
    </location>
</feature>
<feature type="modified residue" description="N6-acetyllysine" evidence="1">
    <location>
        <position position="247"/>
    </location>
</feature>
<feature type="modified residue" description="N6-acetyllysine" evidence="1">
    <location>
        <position position="348"/>
    </location>
</feature>
<feature type="modified residue" description="N6-acetyllysine" evidence="1">
    <location>
        <position position="362"/>
    </location>
</feature>
<feature type="modified residue" description="N6-acetyllysine" evidence="1">
    <location>
        <position position="405"/>
    </location>
</feature>
<feature type="modified residue" description="Phosphoserine" evidence="1">
    <location>
        <position position="408"/>
    </location>
</feature>
<feature type="modified residue" description="N6-acetyllysine" evidence="1">
    <location>
        <position position="414"/>
    </location>
</feature>
<feature type="modified residue" description="N6-acetyllysine" evidence="1">
    <location>
        <position position="430"/>
    </location>
</feature>
<feature type="modified residue" description="N6-acetyllysine" evidence="1">
    <location>
        <position position="490"/>
    </location>
</feature>